<organism>
    <name type="scientific">Escherichia coli (strain K12)</name>
    <dbReference type="NCBI Taxonomy" id="83333"/>
    <lineage>
        <taxon>Bacteria</taxon>
        <taxon>Pseudomonadati</taxon>
        <taxon>Pseudomonadota</taxon>
        <taxon>Gammaproteobacteria</taxon>
        <taxon>Enterobacterales</taxon>
        <taxon>Enterobacteriaceae</taxon>
        <taxon>Escherichia</taxon>
    </lineage>
</organism>
<accession>Q9JMS0</accession>
<gene>
    <name type="primary">yuaU</name>
    <name type="synonym">ydiA</name>
    <name type="ordered locus">ECOK12F035</name>
</gene>
<feature type="chain" id="PRO_0000267225" description="Uncharacterized protein YuaU">
    <location>
        <begin position="1"/>
        <end position="213"/>
    </location>
</feature>
<dbReference type="EMBL" id="AP001918">
    <property type="protein sequence ID" value="BAA97905.1"/>
    <property type="molecule type" value="Genomic_DNA"/>
</dbReference>
<dbReference type="RefSeq" id="NP_061414.1">
    <property type="nucleotide sequence ID" value="NC_002483.1"/>
</dbReference>
<dbReference type="RefSeq" id="WP_000990665.1">
    <property type="nucleotide sequence ID" value="NZ_JACEFS010000051.1"/>
</dbReference>
<dbReference type="KEGG" id="ecoc:C3026_24295"/>
<geneLocation type="plasmid">
    <name>F</name>
</geneLocation>
<protein>
    <recommendedName>
        <fullName>Uncharacterized protein YuaU</fullName>
    </recommendedName>
</protein>
<name>YUAU_ECOLI</name>
<keyword id="KW-0614">Plasmid</keyword>
<sequence length="213" mass="23657">MNADTWTRLQAFRHALELTSCEASLTAGYDHLKDFPAGCSELASQTLTDYLTEDGSNLYSCIVGMQWDNGPGRYGHVIAAPARDYIDLTLDQFPGYHNRIVAEPVESGGQLAADLNREPAISTADGIVASASDKVNYITEQKNRQPMVIITECYKLIRMTARFIPMCQSSQLFQHQIFPRLFIISDVGSCSLSRNTLDRLATDWKVTLSVLSL</sequence>
<reference key="1">
    <citation type="submission" date="2000-04" db="EMBL/GenBank/DDBJ databases">
        <title>Complete nucleotide sequence of the F plasmid: its implications for organization and diversification of plasmid genomes.</title>
        <authorList>
            <person name="Shimizu H."/>
            <person name="Saitoh Y."/>
            <person name="Suda Y."/>
            <person name="Uehara K."/>
            <person name="Sampei G."/>
            <person name="Mizobuchi K."/>
        </authorList>
    </citation>
    <scope>NUCLEOTIDE SEQUENCE [LARGE SCALE GENOMIC DNA]</scope>
    <source>
        <strain>K12 / CR63</strain>
    </source>
</reference>
<proteinExistence type="predicted"/>